<feature type="chain" id="PRO_0000202640" description="Target of rapamycin complex 2 subunit TSC11">
    <location>
        <begin position="1"/>
        <end position="1430"/>
    </location>
</feature>
<feature type="domain" description="N-terminal Ras-GEF">
    <location>
        <begin position="995"/>
        <end position="1100"/>
    </location>
</feature>
<feature type="region of interest" description="Disordered" evidence="2">
    <location>
        <begin position="1"/>
        <end position="62"/>
    </location>
</feature>
<feature type="region of interest" description="Disordered" evidence="2">
    <location>
        <begin position="182"/>
        <end position="285"/>
    </location>
</feature>
<feature type="coiled-coil region" evidence="1">
    <location>
        <begin position="91"/>
        <end position="180"/>
    </location>
</feature>
<feature type="compositionally biased region" description="Polar residues" evidence="2">
    <location>
        <begin position="7"/>
        <end position="26"/>
    </location>
</feature>
<feature type="compositionally biased region" description="Polar residues" evidence="2">
    <location>
        <begin position="35"/>
        <end position="44"/>
    </location>
</feature>
<feature type="compositionally biased region" description="Low complexity" evidence="2">
    <location>
        <begin position="45"/>
        <end position="57"/>
    </location>
</feature>
<feature type="compositionally biased region" description="Polar residues" evidence="2">
    <location>
        <begin position="233"/>
        <end position="265"/>
    </location>
</feature>
<feature type="modified residue" description="Phosphoserine" evidence="10 12">
    <location>
        <position position="19"/>
    </location>
</feature>
<feature type="modified residue" description="Phosphoserine" evidence="12">
    <location>
        <position position="81"/>
    </location>
</feature>
<feature type="modified residue" description="Phosphoserine" evidence="11">
    <location>
        <position position="84"/>
    </location>
</feature>
<feature type="modified residue" description="Phosphoserine" evidence="12">
    <location>
        <position position="87"/>
    </location>
</feature>
<feature type="modified residue" description="Phosphoserine" evidence="12">
    <location>
        <position position="141"/>
    </location>
</feature>
<reference key="1">
    <citation type="journal article" date="1997" name="Nature">
        <title>The nucleotide sequence of Saccharomyces cerevisiae chromosome V.</title>
        <authorList>
            <person name="Dietrich F.S."/>
            <person name="Mulligan J.T."/>
            <person name="Hennessy K.M."/>
            <person name="Yelton M.A."/>
            <person name="Allen E."/>
            <person name="Araujo R."/>
            <person name="Aviles E."/>
            <person name="Berno A."/>
            <person name="Brennan T."/>
            <person name="Carpenter J."/>
            <person name="Chen E."/>
            <person name="Cherry J.M."/>
            <person name="Chung E."/>
            <person name="Duncan M."/>
            <person name="Guzman E."/>
            <person name="Hartzell G."/>
            <person name="Hunicke-Smith S."/>
            <person name="Hyman R.W."/>
            <person name="Kayser A."/>
            <person name="Komp C."/>
            <person name="Lashkari D."/>
            <person name="Lew H."/>
            <person name="Lin D."/>
            <person name="Mosedale D."/>
            <person name="Nakahara K."/>
            <person name="Namath A."/>
            <person name="Norgren R."/>
            <person name="Oefner P."/>
            <person name="Oh C."/>
            <person name="Petel F.X."/>
            <person name="Roberts D."/>
            <person name="Sehl P."/>
            <person name="Schramm S."/>
            <person name="Shogren T."/>
            <person name="Smith V."/>
            <person name="Taylor P."/>
            <person name="Wei Y."/>
            <person name="Botstein D."/>
            <person name="Davis R.W."/>
        </authorList>
    </citation>
    <scope>NUCLEOTIDE SEQUENCE [LARGE SCALE GENOMIC DNA]</scope>
    <source>
        <strain>ATCC 204508 / S288c</strain>
    </source>
</reference>
<reference key="2">
    <citation type="journal article" date="2014" name="G3 (Bethesda)">
        <title>The reference genome sequence of Saccharomyces cerevisiae: Then and now.</title>
        <authorList>
            <person name="Engel S.R."/>
            <person name="Dietrich F.S."/>
            <person name="Fisk D.G."/>
            <person name="Binkley G."/>
            <person name="Balakrishnan R."/>
            <person name="Costanzo M.C."/>
            <person name="Dwight S.S."/>
            <person name="Hitz B.C."/>
            <person name="Karra K."/>
            <person name="Nash R.S."/>
            <person name="Weng S."/>
            <person name="Wong E.D."/>
            <person name="Lloyd P."/>
            <person name="Skrzypek M.S."/>
            <person name="Miyasato S.R."/>
            <person name="Simison M."/>
            <person name="Cherry J.M."/>
        </authorList>
    </citation>
    <scope>GENOME REANNOTATION</scope>
    <source>
        <strain>ATCC 204508 / S288c</strain>
    </source>
</reference>
<reference key="3">
    <citation type="submission" date="1995-07" db="EMBL/GenBank/DDBJ databases">
        <title>Structure and regulation of MET6, the vitamin B12-independent methionine synthase gene of Saccharomyces cerevisiae.</title>
        <authorList>
            <person name="Korch C."/>
            <person name="Mountain H.A."/>
            <person name="Wenzlau J.M."/>
        </authorList>
    </citation>
    <scope>NUCLEOTIDE SEQUENCE [GENOMIC DNA] OF 967-1430</scope>
    <source>
        <strain>ATCC 204508 / S288c</strain>
    </source>
</reference>
<reference key="4">
    <citation type="journal article" date="2002" name="Mol. Cell">
        <title>Two TOR complexes, only one of which is rapamycin sensitive, have distinct roles in cell growth control.</title>
        <authorList>
            <person name="Loewith R."/>
            <person name="Jacinto E."/>
            <person name="Wullschleger S."/>
            <person name="Lorberg A."/>
            <person name="Crespo J.L."/>
            <person name="Bonenfant D."/>
            <person name="Oppliger W."/>
            <person name="Jenoe P."/>
            <person name="Hall M.N."/>
        </authorList>
    </citation>
    <scope>IDENTIFICATION IN TORC2</scope>
    <scope>IDENTIFICATION BY MASS SPECTROMETRY</scope>
</reference>
<reference key="5">
    <citation type="journal article" date="2003" name="Mol. Biol. Cell">
        <title>Tor kinases are in distinct membrane-associated protein complexes in Saccharomyces cerevisiae.</title>
        <authorList>
            <person name="Wedaman K.P."/>
            <person name="Reinke A."/>
            <person name="Anderson S."/>
            <person name="Yates J.R. III"/>
            <person name="McCaffery J.M."/>
            <person name="Powers T."/>
        </authorList>
    </citation>
    <scope>SUBCELLULAR LOCATION</scope>
    <scope>IDENTIFICATION IN TORC2</scope>
    <scope>IDENTIFICATION BY MASS SPECTROMETRY</scope>
</reference>
<reference key="6">
    <citation type="journal article" date="2003" name="Nature">
        <title>Global analysis of protein expression in yeast.</title>
        <authorList>
            <person name="Ghaemmaghami S."/>
            <person name="Huh W.-K."/>
            <person name="Bower K."/>
            <person name="Howson R.W."/>
            <person name="Belle A."/>
            <person name="Dephoure N."/>
            <person name="O'Shea E.K."/>
            <person name="Weissman J.S."/>
        </authorList>
    </citation>
    <scope>LEVEL OF PROTEIN EXPRESSION [LARGE SCALE ANALYSIS]</scope>
</reference>
<reference key="7">
    <citation type="journal article" date="2005" name="J. Biol. Chem.">
        <title>Molecular organization of target of rapamycin complex 2.</title>
        <authorList>
            <person name="Wullschleger S."/>
            <person name="Loewith R."/>
            <person name="Oppliger W."/>
            <person name="Hall M.N."/>
        </authorList>
    </citation>
    <scope>SUBUNIT</scope>
    <scope>INTERACTION WITH TOR2</scope>
    <scope>PHOSPHORYLATION</scope>
</reference>
<reference key="8">
    <citation type="journal article" date="2005" name="Curr. Genet.">
        <title>Saccharomyces cerevisiae TSC11/AVO3 participates in regulating cell integrity and functionally interacts with components of the Tor2 complex.</title>
        <authorList>
            <person name="Ho H.-L."/>
            <person name="Shiau Y.-S."/>
            <person name="Chen M.-Y."/>
        </authorList>
    </citation>
    <scope>FUNCTION</scope>
</reference>
<reference key="9">
    <citation type="journal article" date="2007" name="J. Proteome Res.">
        <title>Large-scale phosphorylation analysis of alpha-factor-arrested Saccharomyces cerevisiae.</title>
        <authorList>
            <person name="Li X."/>
            <person name="Gerber S.A."/>
            <person name="Rudner A.D."/>
            <person name="Beausoleil S.A."/>
            <person name="Haas W."/>
            <person name="Villen J."/>
            <person name="Elias J.E."/>
            <person name="Gygi S.P."/>
        </authorList>
    </citation>
    <scope>PHOSPHORYLATION [LARGE SCALE ANALYSIS] AT SER-19</scope>
    <scope>IDENTIFICATION BY MASS SPECTROMETRY [LARGE SCALE ANALYSIS]</scope>
    <source>
        <strain>ADR376</strain>
    </source>
</reference>
<reference key="10">
    <citation type="journal article" date="2008" name="Mol. Cell. Proteomics">
        <title>A multidimensional chromatography technology for in-depth phosphoproteome analysis.</title>
        <authorList>
            <person name="Albuquerque C.P."/>
            <person name="Smolka M.B."/>
            <person name="Payne S.H."/>
            <person name="Bafna V."/>
            <person name="Eng J."/>
            <person name="Zhou H."/>
        </authorList>
    </citation>
    <scope>PHOSPHORYLATION [LARGE SCALE ANALYSIS] AT SER-84</scope>
    <scope>IDENTIFICATION BY MASS SPECTROMETRY [LARGE SCALE ANALYSIS]</scope>
</reference>
<reference key="11">
    <citation type="journal article" date="2009" name="Science">
        <title>Global analysis of Cdk1 substrate phosphorylation sites provides insights into evolution.</title>
        <authorList>
            <person name="Holt L.J."/>
            <person name="Tuch B.B."/>
            <person name="Villen J."/>
            <person name="Johnson A.D."/>
            <person name="Gygi S.P."/>
            <person name="Morgan D.O."/>
        </authorList>
    </citation>
    <scope>PHOSPHORYLATION [LARGE SCALE ANALYSIS] AT SER-19; SER-81; SER-87 AND SER-141</scope>
    <scope>IDENTIFICATION BY MASS SPECTROMETRY [LARGE SCALE ANALYSIS]</scope>
</reference>
<reference key="12">
    <citation type="journal article" date="2017" name="Nat. Commun.">
        <title>Cryo-EM structure of Saccharomyces cerevisiae target of rapamycin complex 2.</title>
        <authorList>
            <person name="Karuppasamy M."/>
            <person name="Kusmider B."/>
            <person name="Oliveira T.M."/>
            <person name="Gaubitz C."/>
            <person name="Prouteau M."/>
            <person name="Loewith R."/>
            <person name="Schaffitzel C."/>
        </authorList>
    </citation>
    <scope>STRUCTURE BY ELECTRON MICROSCOPY (7.90 ANGSTROMS) OF THE TORC2 COMPLEX</scope>
    <scope>IDENTIFICATION IN THE TORC2 COMPLEX</scope>
</reference>
<organism>
    <name type="scientific">Saccharomyces cerevisiae (strain ATCC 204508 / S288c)</name>
    <name type="common">Baker's yeast</name>
    <dbReference type="NCBI Taxonomy" id="559292"/>
    <lineage>
        <taxon>Eukaryota</taxon>
        <taxon>Fungi</taxon>
        <taxon>Dikarya</taxon>
        <taxon>Ascomycota</taxon>
        <taxon>Saccharomycotina</taxon>
        <taxon>Saccharomycetes</taxon>
        <taxon>Saccharomycetales</taxon>
        <taxon>Saccharomycetaceae</taxon>
        <taxon>Saccharomyces</taxon>
    </lineage>
</organism>
<accession>P40061</accession>
<accession>D3DM00</accession>
<keyword id="KW-1003">Cell membrane</keyword>
<keyword id="KW-0175">Coiled coil</keyword>
<keyword id="KW-0344">Guanine-nucleotide releasing factor</keyword>
<keyword id="KW-0472">Membrane</keyword>
<keyword id="KW-0597">Phosphoprotein</keyword>
<keyword id="KW-1185">Reference proteome</keyword>
<keyword id="KW-0926">Vacuole</keyword>
<gene>
    <name type="primary">TSC11</name>
    <name type="synonym">AVO3</name>
    <name type="ordered locus">YER093C</name>
</gene>
<protein>
    <recommendedName>
        <fullName>Target of rapamycin complex 2 subunit TSC11</fullName>
        <shortName>TORC2 subunit TSC11</shortName>
    </recommendedName>
    <alternativeName>
        <fullName>Adheres voraciously to TOR2 protein 3</fullName>
    </alternativeName>
    <alternativeName>
        <fullName>Temperature-sensitive CSG2 suppressor protein 11</fullName>
    </alternativeName>
</protein>
<sequence>MSIPHSAKQSSPLSSRRRSVTNTTPLLTPRHSRDNSSTQISSAKNITSSSPSTITNESSKRNKQNLVLSTSFISTKRLENSAPSPTSPLMARRTRSTMTKALLNLKAEINNQYQELARLRKKKDDIEHLRDSTISDIYSGSYSTNHLQKHSMRIRANTQLREIDNSIKRVEKHIFDLKQQFDKKRQRSLTTSSSIKADVGSIRNDDGQNNDSEELGDHDSLTDQVTLDDEYLTTPTSGTERNSQQNLNRNSTVNSRNNENHSTLSIPDLDGSNKVNLTGDTEKDLGDLENENQIFTSTTTEAATWLVSDYMQSFQEKNVNPDFIAQKANGLVTLLKEHSEIRKDLVLTSFMSSIQNLLLNGNKLIAASAYRVCRYLINSSIFIDELLELRLDAFIIISLAKDNSFQIEREQALKMVRRFIEYNNGVTQGIMQAIISCVEKPEDSLRHMALETLLELCFVAPEMVKECRGMRVIEGFLQDYTSFSLASVILDTILQLMATHKTRQHFLEDFNVSVLTTVFSDTNTKSNVNVEKMQNASTLISITLNSYNGFMLFSNNNFKPLKQLVSFFQIPICAQYLIDIFLDVLKIKPLPYKPRGRHSHSFKPIPSQYYKECMSVNQRLALIVLILENSEFVPHLLELLNEEDRDDHLVAKGRYLLTEYFNLRMNLVDKKYTSVSKPIYKENFTYVNETFQFKKIAYKMNRNRNTIGMSGIDYAQNIKSFSKNIKENTLLREVDDFRFRRMVYDSKVLQTKDFTRWNWNIINELLEGPLLNKKQLEELVKSTKFIRRLLVFYRPLRLRFSNVNKGAKLSQKYVQVGCQFFKTLTATPEGMKILMDDTKIIPQLASLMFRAMEGNISGNIFNKNKLREKIIFGYFKFIGILTQSKNGVHILTRWNFFTVIYKMFQFESKLGLEFLLLTIPELDLKYSSHCRVIIGKALVVANEKVRIEATKHIGDKLKELLSTKESDLKLKANKVKLQQFKMEMLTRQLYDLSPSVVAVADQALYECIVAGNGSEELGTSFRMFLNQMVFIRSPILFELLSRPYGFQLLNEINFVKEERDSWLSKKNIEYVHIVEEFLKKNESINAKSLTFQQKSRLPLHFYESLTKTEDGILLLSQTGDLVTFMNVIKKYVNGNNMATVENAKEILDLKAALWCVGFIGSTELGIGLLDNYSLVEDIIEVAYNASVTSVRFTAFYVLGLISMTREGCEILDEMGWNCCVSVQDEPIGIALPNRLDRFLSYNEHKWSAFGEYSDEMIVFNKSDGDLIEKCLPIEFDLDKLLKEKDTAENPLNEKIITNKYDNDITSQTITVSGENSSLFANEGLSSPYVTQYRNDDDSIESKVLHIVSQLGNHILSNHAVKEITEINNKYGPRLFENEKMFFKVFNMMSKYRFKPHVRKFLCGLFINNRALENVIRHDNKRDKRPANFTR</sequence>
<proteinExistence type="evidence at protein level"/>
<evidence type="ECO:0000255" key="1"/>
<evidence type="ECO:0000256" key="2">
    <source>
        <dbReference type="SAM" id="MobiDB-lite"/>
    </source>
</evidence>
<evidence type="ECO:0000269" key="3">
    <source>
    </source>
</evidence>
<evidence type="ECO:0000269" key="4">
    <source>
    </source>
</evidence>
<evidence type="ECO:0000269" key="5">
    <source>
    </source>
</evidence>
<evidence type="ECO:0000269" key="6">
    <source>
    </source>
</evidence>
<evidence type="ECO:0000269" key="7">
    <source>
    </source>
</evidence>
<evidence type="ECO:0000269" key="8">
    <source>
    </source>
</evidence>
<evidence type="ECO:0000305" key="9"/>
<evidence type="ECO:0007744" key="10">
    <source>
    </source>
</evidence>
<evidence type="ECO:0007744" key="11">
    <source>
    </source>
</evidence>
<evidence type="ECO:0007744" key="12">
    <source>
    </source>
</evidence>
<name>TSC11_YEAST</name>
<comment type="function">
    <text evidence="6">Essential component of TORC2, which regulates cell cycle-dependent polarization of the actin-cytoskeleton and cell wall integrity. TORC2 controls polarity of the actin cytoskeleton, which is required for orienting the secretory pathway toward discrete growth sites, via the RHO1/PKC1/MAPK cell integrity pathway. TSC11 may exert its functions through two distinct mechanisms, one mediated by AVO1 and the other mediated by AVO2 and SLM1.</text>
</comment>
<comment type="subunit">
    <text evidence="3 4 7 8">The target of rapamycin complex 2 (TORC2) is composed of at least AVO1, AVO2, BIT61, LST8, TOR2 and TSC11 (PubMed:12408816, PubMed:12631735, PubMed:16002396, PubMed:29170376). TORC2 forms a homodimer (PubMed:12408816, PubMed:12631735, PubMed:16002396, PubMed:29170376). Contrary to TORC1, TORC2 does not bind to and is not sensitive to FKBP-rapamycin (PubMed:12408816, PubMed:12631735, PubMed:16002396, PubMed:29170376). TSC11 binds to the N-terminal HEAT repeat region in TOR2 and is required for TORC2 integrity by tethering AVO1 and AVO2 to the complex (PubMed:12408816, PubMed:12631735, PubMed:16002396, PubMed:29170376).</text>
</comment>
<comment type="interaction">
    <interactant intactId="EBI-22621">
        <id>P40061</id>
    </interactant>
    <interactant intactId="EBI-28598">
        <id>P41318</id>
        <label>LST8</label>
    </interactant>
    <organismsDiffer>false</organismsDiffer>
    <experiments>2</experiments>
</comment>
<comment type="interaction">
    <interactant intactId="EBI-22621">
        <id>P40061</id>
    </interactant>
    <interactant intactId="EBI-19385">
        <id>P32600</id>
        <label>TOR2</label>
    </interactant>
    <organismsDiffer>false</organismsDiffer>
    <experiments>5</experiments>
</comment>
<comment type="subcellular location">
    <subcellularLocation>
        <location evidence="4">Cell membrane</location>
        <topology evidence="4">Peripheral membrane protein</topology>
        <orientation evidence="4">Cytoplasmic side</orientation>
    </subcellularLocation>
    <subcellularLocation>
        <location evidence="4">Vacuole membrane</location>
        <topology evidence="4">Peripheral membrane protein</topology>
        <orientation evidence="4">Cytoplasmic side</orientation>
    </subcellularLocation>
</comment>
<comment type="PTM">
    <text evidence="7">Phosphorylated by TOR2; when part of TORC2.</text>
</comment>
<comment type="miscellaneous">
    <text evidence="5">Present with 1840 molecules/cell in log phase SD medium.</text>
</comment>
<comment type="similarity">
    <text evidence="9">Belongs to the RICTOR family.</text>
</comment>
<dbReference type="EMBL" id="U18839">
    <property type="protein sequence ID" value="AAB64648.1"/>
    <property type="molecule type" value="Genomic_DNA"/>
</dbReference>
<dbReference type="EMBL" id="U32508">
    <property type="protein sequence ID" value="AAB60298.1"/>
    <property type="molecule type" value="Genomic_DNA"/>
</dbReference>
<dbReference type="EMBL" id="BK006939">
    <property type="protein sequence ID" value="DAA07754.1"/>
    <property type="molecule type" value="Genomic_DNA"/>
</dbReference>
<dbReference type="PIR" id="S50596">
    <property type="entry name" value="S50596"/>
</dbReference>
<dbReference type="RefSeq" id="NP_011018.1">
    <property type="nucleotide sequence ID" value="NM_001178984.1"/>
</dbReference>
<dbReference type="SMR" id="P40061"/>
<dbReference type="BioGRID" id="36838">
    <property type="interactions" value="634"/>
</dbReference>
<dbReference type="ComplexPortal" id="CPX-1717">
    <property type="entry name" value="TORC2 complex"/>
</dbReference>
<dbReference type="DIP" id="DIP-4957N"/>
<dbReference type="FunCoup" id="P40061">
    <property type="interactions" value="583"/>
</dbReference>
<dbReference type="IntAct" id="P40061">
    <property type="interactions" value="10"/>
</dbReference>
<dbReference type="MINT" id="P40061"/>
<dbReference type="STRING" id="4932.YER093C"/>
<dbReference type="GlyGen" id="P40061">
    <property type="glycosylation" value="1 site"/>
</dbReference>
<dbReference type="iPTMnet" id="P40061"/>
<dbReference type="PaxDb" id="4932-YER093C"/>
<dbReference type="PeptideAtlas" id="P40061"/>
<dbReference type="EnsemblFungi" id="YER093C_mRNA">
    <property type="protein sequence ID" value="YER093C"/>
    <property type="gene ID" value="YER093C"/>
</dbReference>
<dbReference type="GeneID" id="856828"/>
<dbReference type="KEGG" id="sce:YER093C"/>
<dbReference type="AGR" id="SGD:S000000895"/>
<dbReference type="SGD" id="S000000895">
    <property type="gene designation" value="TSC11"/>
</dbReference>
<dbReference type="VEuPathDB" id="FungiDB:YER093C"/>
<dbReference type="eggNOG" id="KOG3694">
    <property type="taxonomic scope" value="Eukaryota"/>
</dbReference>
<dbReference type="GeneTree" id="ENSGT00390000002096"/>
<dbReference type="HOGENOM" id="CLU_001013_1_1_1"/>
<dbReference type="InParanoid" id="P40061"/>
<dbReference type="OMA" id="QAIISCV"/>
<dbReference type="OrthoDB" id="271111at2759"/>
<dbReference type="BioCyc" id="YEAST:G3O-30260-MONOMER"/>
<dbReference type="Reactome" id="R-SCE-1257604">
    <property type="pathway name" value="PIP3 activates AKT signaling"/>
</dbReference>
<dbReference type="Reactome" id="R-SCE-389357">
    <property type="pathway name" value="CD28 dependent PI3K/Akt signaling"/>
</dbReference>
<dbReference type="Reactome" id="R-SCE-5218920">
    <property type="pathway name" value="VEGFR2 mediated vascular permeability"/>
</dbReference>
<dbReference type="Reactome" id="R-SCE-6804757">
    <property type="pathway name" value="Regulation of TP53 Degradation"/>
</dbReference>
<dbReference type="Reactome" id="R-SCE-9856530">
    <property type="pathway name" value="High laminar flow shear stress activates signaling by PIEZO1 and PECAM1:CDH5:KDR in endothelial cells"/>
</dbReference>
<dbReference type="BioGRID-ORCS" id="856828">
    <property type="hits" value="0 hits in 10 CRISPR screens"/>
</dbReference>
<dbReference type="PRO" id="PR:P40061"/>
<dbReference type="Proteomes" id="UP000002311">
    <property type="component" value="Chromosome V"/>
</dbReference>
<dbReference type="RNAct" id="P40061">
    <property type="molecule type" value="protein"/>
</dbReference>
<dbReference type="GO" id="GO:0005829">
    <property type="term" value="C:cytosol"/>
    <property type="evidence" value="ECO:0007005"/>
    <property type="project" value="SGD"/>
</dbReference>
<dbReference type="GO" id="GO:0005886">
    <property type="term" value="C:plasma membrane"/>
    <property type="evidence" value="ECO:0000314"/>
    <property type="project" value="SGD"/>
</dbReference>
<dbReference type="GO" id="GO:0031932">
    <property type="term" value="C:TORC2 complex"/>
    <property type="evidence" value="ECO:0000314"/>
    <property type="project" value="UniProtKB"/>
</dbReference>
<dbReference type="GO" id="GO:0005774">
    <property type="term" value="C:vacuolar membrane"/>
    <property type="evidence" value="ECO:0007669"/>
    <property type="project" value="UniProtKB-SubCell"/>
</dbReference>
<dbReference type="GO" id="GO:0005085">
    <property type="term" value="F:guanyl-nucleotide exchange factor activity"/>
    <property type="evidence" value="ECO:0007669"/>
    <property type="project" value="UniProtKB-KW"/>
</dbReference>
<dbReference type="GO" id="GO:0060090">
    <property type="term" value="F:molecular adaptor activity"/>
    <property type="evidence" value="ECO:0000315"/>
    <property type="project" value="SGD"/>
</dbReference>
<dbReference type="GO" id="GO:0043495">
    <property type="term" value="F:protein-membrane adaptor activity"/>
    <property type="evidence" value="ECO:0000315"/>
    <property type="project" value="SGD"/>
</dbReference>
<dbReference type="GO" id="GO:0030950">
    <property type="term" value="P:establishment or maintenance of actin cytoskeleton polarity"/>
    <property type="evidence" value="ECO:0000315"/>
    <property type="project" value="SGD"/>
</dbReference>
<dbReference type="GO" id="GO:0031505">
    <property type="term" value="P:fungal-type cell wall organization"/>
    <property type="evidence" value="ECO:0000315"/>
    <property type="project" value="SGD"/>
</dbReference>
<dbReference type="GO" id="GO:0072659">
    <property type="term" value="P:protein localization to plasma membrane"/>
    <property type="evidence" value="ECO:0000315"/>
    <property type="project" value="SGD"/>
</dbReference>
<dbReference type="GO" id="GO:0001558">
    <property type="term" value="P:regulation of cell growth"/>
    <property type="evidence" value="ECO:0000353"/>
    <property type="project" value="SGD"/>
</dbReference>
<dbReference type="GO" id="GO:0030148">
    <property type="term" value="P:sphingolipid biosynthetic process"/>
    <property type="evidence" value="ECO:0000315"/>
    <property type="project" value="SGD"/>
</dbReference>
<dbReference type="GO" id="GO:0031929">
    <property type="term" value="P:TOR signaling"/>
    <property type="evidence" value="ECO:0000303"/>
    <property type="project" value="ComplexPortal"/>
</dbReference>
<dbReference type="GO" id="GO:0038203">
    <property type="term" value="P:TORC2 signaling"/>
    <property type="evidence" value="ECO:0000318"/>
    <property type="project" value="GO_Central"/>
</dbReference>
<dbReference type="FunFam" id="1.25.10.10:FF:000660">
    <property type="entry name" value="Temperature-sensitive Csg2 suppressor"/>
    <property type="match status" value="1"/>
</dbReference>
<dbReference type="Gene3D" id="1.25.10.10">
    <property type="entry name" value="Leucine-rich Repeat Variant"/>
    <property type="match status" value="1"/>
</dbReference>
<dbReference type="InterPro" id="IPR011989">
    <property type="entry name" value="ARM-like"/>
</dbReference>
<dbReference type="InterPro" id="IPR016024">
    <property type="entry name" value="ARM-type_fold"/>
</dbReference>
<dbReference type="InterPro" id="IPR028268">
    <property type="entry name" value="Pianissimo_fam"/>
</dbReference>
<dbReference type="InterPro" id="IPR028267">
    <property type="entry name" value="Pianissimo_N"/>
</dbReference>
<dbReference type="InterPro" id="IPR029453">
    <property type="entry name" value="Rictor_IV"/>
</dbReference>
<dbReference type="InterPro" id="IPR029451">
    <property type="entry name" value="RICTOR_M"/>
</dbReference>
<dbReference type="InterPro" id="IPR029452">
    <property type="entry name" value="RICTOR_V"/>
</dbReference>
<dbReference type="PANTHER" id="PTHR13298">
    <property type="entry name" value="CYTOSOLIC REGULATOR PIANISSIMO"/>
    <property type="match status" value="1"/>
</dbReference>
<dbReference type="PANTHER" id="PTHR13298:SF11">
    <property type="entry name" value="RAPAMYCIN-INSENSITIVE COMPANION OF MTOR"/>
    <property type="match status" value="1"/>
</dbReference>
<dbReference type="Pfam" id="PF14663">
    <property type="entry name" value="RasGEF_N_2"/>
    <property type="match status" value="1"/>
</dbReference>
<dbReference type="Pfam" id="PF14666">
    <property type="entry name" value="RICTOR_M"/>
    <property type="match status" value="1"/>
</dbReference>
<dbReference type="Pfam" id="PF14664">
    <property type="entry name" value="RICTOR_N"/>
    <property type="match status" value="1"/>
</dbReference>
<dbReference type="Pfam" id="PF14668">
    <property type="entry name" value="RICTOR_V"/>
    <property type="match status" value="1"/>
</dbReference>
<dbReference type="SMART" id="SM01303">
    <property type="entry name" value="RasGEF_N_2"/>
    <property type="match status" value="1"/>
</dbReference>
<dbReference type="SMART" id="SM01307">
    <property type="entry name" value="RICTOR_M"/>
    <property type="match status" value="1"/>
</dbReference>
<dbReference type="SMART" id="SM01308">
    <property type="entry name" value="RICTOR_N"/>
    <property type="match status" value="1"/>
</dbReference>
<dbReference type="SMART" id="SM01310">
    <property type="entry name" value="RICTOR_V"/>
    <property type="match status" value="1"/>
</dbReference>
<dbReference type="SUPFAM" id="SSF48371">
    <property type="entry name" value="ARM repeat"/>
    <property type="match status" value="1"/>
</dbReference>